<proteinExistence type="evidence at transcript level"/>
<protein>
    <recommendedName>
        <fullName evidence="1">Putative E3 ubiquitin-protein ligase LIN-1</fullName>
        <ecNumber evidence="5">2.3.2.27</ecNumber>
    </recommendedName>
    <alternativeName>
        <fullName evidence="5">Protein cerberus</fullName>
    </alternativeName>
    <alternativeName>
        <fullName evidence="6">RING-type E3 ubiquitin transferase LIN-1</fullName>
    </alternativeName>
</protein>
<dbReference type="EC" id="2.3.2.27" evidence="5"/>
<dbReference type="EMBL" id="AB505797">
    <property type="protein sequence ID" value="BAH86605.1"/>
    <property type="status" value="ALT_INIT"/>
    <property type="molecule type" value="mRNA"/>
</dbReference>
<dbReference type="EMBL" id="AB505798">
    <property type="protein sequence ID" value="BAH86606.1"/>
    <property type="status" value="ALT_INIT"/>
    <property type="molecule type" value="Genomic_DNA"/>
</dbReference>
<dbReference type="SMR" id="C6L7U1"/>
<dbReference type="UniPathway" id="UPA00143"/>
<dbReference type="GO" id="GO:0004842">
    <property type="term" value="F:ubiquitin-protein transferase activity"/>
    <property type="evidence" value="ECO:0007669"/>
    <property type="project" value="InterPro"/>
</dbReference>
<dbReference type="GO" id="GO:0009877">
    <property type="term" value="P:nodulation"/>
    <property type="evidence" value="ECO:0007669"/>
    <property type="project" value="UniProtKB-KW"/>
</dbReference>
<dbReference type="GO" id="GO:0016567">
    <property type="term" value="P:protein ubiquitination"/>
    <property type="evidence" value="ECO:0007669"/>
    <property type="project" value="UniProtKB-UniPathway"/>
</dbReference>
<dbReference type="CDD" id="cd16664">
    <property type="entry name" value="RING-Ubox_PUB"/>
    <property type="match status" value="1"/>
</dbReference>
<dbReference type="Gene3D" id="1.25.10.10">
    <property type="entry name" value="Leucine-rich Repeat Variant"/>
    <property type="match status" value="1"/>
</dbReference>
<dbReference type="Gene3D" id="2.130.10.10">
    <property type="entry name" value="YVTN repeat-like/Quinoprotein amine dehydrogenase"/>
    <property type="match status" value="2"/>
</dbReference>
<dbReference type="Gene3D" id="3.30.40.10">
    <property type="entry name" value="Zinc/RING finger domain, C3HC4 (zinc finger)"/>
    <property type="match status" value="1"/>
</dbReference>
<dbReference type="InterPro" id="IPR011989">
    <property type="entry name" value="ARM-like"/>
</dbReference>
<dbReference type="InterPro" id="IPR016024">
    <property type="entry name" value="ARM-type_fold"/>
</dbReference>
<dbReference type="InterPro" id="IPR055566">
    <property type="entry name" value="ARM_LIN"/>
</dbReference>
<dbReference type="InterPro" id="IPR056514">
    <property type="entry name" value="ARM_LIN_2nd"/>
</dbReference>
<dbReference type="InterPro" id="IPR052858">
    <property type="entry name" value="E3_ubiquitin-ligase_LIN"/>
</dbReference>
<dbReference type="InterPro" id="IPR056512">
    <property type="entry name" value="LIN_N"/>
</dbReference>
<dbReference type="InterPro" id="IPR045210">
    <property type="entry name" value="RING-Ubox_PUB"/>
</dbReference>
<dbReference type="InterPro" id="IPR003613">
    <property type="entry name" value="Ubox_domain"/>
</dbReference>
<dbReference type="InterPro" id="IPR015943">
    <property type="entry name" value="WD40/YVTN_repeat-like_dom_sf"/>
</dbReference>
<dbReference type="InterPro" id="IPR036322">
    <property type="entry name" value="WD40_repeat_dom_sf"/>
</dbReference>
<dbReference type="InterPro" id="IPR001680">
    <property type="entry name" value="WD40_rpt"/>
</dbReference>
<dbReference type="InterPro" id="IPR013083">
    <property type="entry name" value="Znf_RING/FYVE/PHD"/>
</dbReference>
<dbReference type="PANTHER" id="PTHR47446">
    <property type="entry name" value="RING-TYPE E3 UBIQUITIN TRANSFERASE"/>
    <property type="match status" value="1"/>
</dbReference>
<dbReference type="PANTHER" id="PTHR47446:SF3">
    <property type="entry name" value="RING-TYPE E3 UBIQUITIN TRANSFERASE"/>
    <property type="match status" value="1"/>
</dbReference>
<dbReference type="Pfam" id="PF23568">
    <property type="entry name" value="ARM_LIN"/>
    <property type="match status" value="1"/>
</dbReference>
<dbReference type="Pfam" id="PF23654">
    <property type="entry name" value="ARM_LIN_2nd"/>
    <property type="match status" value="1"/>
</dbReference>
<dbReference type="Pfam" id="PF23628">
    <property type="entry name" value="ARM_LIN_C"/>
    <property type="match status" value="1"/>
</dbReference>
<dbReference type="Pfam" id="PF04564">
    <property type="entry name" value="U-box"/>
    <property type="match status" value="1"/>
</dbReference>
<dbReference type="Pfam" id="PF00400">
    <property type="entry name" value="WD40"/>
    <property type="match status" value="3"/>
</dbReference>
<dbReference type="SMART" id="SM00504">
    <property type="entry name" value="Ubox"/>
    <property type="match status" value="1"/>
</dbReference>
<dbReference type="SMART" id="SM00320">
    <property type="entry name" value="WD40"/>
    <property type="match status" value="3"/>
</dbReference>
<dbReference type="SUPFAM" id="SSF48371">
    <property type="entry name" value="ARM repeat"/>
    <property type="match status" value="1"/>
</dbReference>
<dbReference type="SUPFAM" id="SSF57850">
    <property type="entry name" value="RING/U-box"/>
    <property type="match status" value="1"/>
</dbReference>
<dbReference type="SUPFAM" id="SSF50978">
    <property type="entry name" value="WD40 repeat-like"/>
    <property type="match status" value="1"/>
</dbReference>
<dbReference type="PROSITE" id="PS51698">
    <property type="entry name" value="U_BOX"/>
    <property type="match status" value="1"/>
</dbReference>
<dbReference type="PROSITE" id="PS00678">
    <property type="entry name" value="WD_REPEATS_1"/>
    <property type="match status" value="1"/>
</dbReference>
<dbReference type="PROSITE" id="PS50082">
    <property type="entry name" value="WD_REPEATS_2"/>
    <property type="match status" value="3"/>
</dbReference>
<dbReference type="PROSITE" id="PS50294">
    <property type="entry name" value="WD_REPEATS_REGION"/>
    <property type="match status" value="2"/>
</dbReference>
<name>LIN1_LOTJA</name>
<organism>
    <name type="scientific">Lotus japonicus</name>
    <name type="common">Lotus corniculatus var. japonicus</name>
    <dbReference type="NCBI Taxonomy" id="34305"/>
    <lineage>
        <taxon>Eukaryota</taxon>
        <taxon>Viridiplantae</taxon>
        <taxon>Streptophyta</taxon>
        <taxon>Embryophyta</taxon>
        <taxon>Tracheophyta</taxon>
        <taxon>Spermatophyta</taxon>
        <taxon>Magnoliopsida</taxon>
        <taxon>eudicotyledons</taxon>
        <taxon>Gunneridae</taxon>
        <taxon>Pentapetalae</taxon>
        <taxon>rosids</taxon>
        <taxon>fabids</taxon>
        <taxon>Fabales</taxon>
        <taxon>Fabaceae</taxon>
        <taxon>Papilionoideae</taxon>
        <taxon>50 kb inversion clade</taxon>
        <taxon>NPAAA clade</taxon>
        <taxon>Hologalegina</taxon>
        <taxon>robinioid clade</taxon>
        <taxon>Loteae</taxon>
        <taxon>Lotus</taxon>
    </lineage>
</organism>
<sequence>MARNFRFMMDQKDIVRFLTTTVDSFIQDRLINKEQRTQHKEQCAERLAAEDGSGDKDTEVEYSDQAVLANLDWGIEALEEAINTYNMETKLARLDYAEKMLQVCAMLNPKQKIAGVPNSYLSAWAHLNLSYLWKLRNNVQNCISHALEMFIVDPFFTRIDFAPELWKSLFLPHMSSIVGWYSEERHRLMMEVIPDSADLSFTADFEQFFNESLVLTMRPHQLEKLQKLEQLYGESLDENTKLYAKYYNDCMNSDSSSSKKAVPMLPIAEPPMTPLHELSRTIPDFVKFGPILPKSAGFSLAPRSKDVLNETIRENVTSSNLKEEKLSIWGAKDTIIEENEDDSDSELENESVDSDDKNNIFSPGMKMMKYEGVETKVDLSCQRNQIPSPDIFSPLDSPRTAPNNSSPNPDMHSKRDSKFLRLSSSRIREPTISDSLTSSPDISIDNISNADNEVMVLKNIQRKNDNQTLSMNHENENSLILNGSSLCESDDGYQSFNSLPKLEKLSMGSKPPKDFVCPITGQIFCDPVTLETGQTYERKAIQEWLRTGNTTCPITRQPLSASILPKTNYVLKRLITSWKEQNPELAQEFSNVNTPRGSSCSPSAKDIPMLSTRQRTTDSPNHKNKDYARQRSNRFMPAAITTSPTSVLSQAAVETIVNSLKPYISSLCTSENLPECEEAVLKIARLLKDSKTNPQIHSYLSKPTIINGLVEILSASRNREVLRTSIYILSELIFTDDSVAETLNSVDSDFDCLATLLKNGLAEAALLIYQLRPVFAQLSAHELIPSLVDVIQNKNEELDDFQLVIDPKDAAIAILEQTLMGGDEYSRSLNASSVISANGIPTLVKYLERMEGRRSVVSVLLCCMQAEKSCKNLIANRIELSPVLELFHSGNDSVRGTCVEFLSELVQLNRRTSCNQILHTIKDEGAFSTMHTFLVYLQMAPMEHQLAVASLLLQLDLLAEPRKMSIYREEAVETLIEALWQKDFSNTQMKALDALLFLIGHISSSGKSYTEAWLLKIAGFDQPYNALMKVEQLGQHDNDLIETMEDEKNALNSWQKRIASVLCNHENGSIFKALEECLKSNSLKMAKSCLVLATWLTHMLYTLPDTGVRDVARKSLLEEVINVLQSSKNLEEKILATLALKTFISDPSTHEALRVYAKSIYRTLRRLKKYSVVAVDIMKVILNLKSVDVTELWSCKEVVELDLSSNGEVLSMVYLNGQVLSGHTDGTIKVWDARKRIPRVIQETHEHTKAVTSLCSSGDRLYSGSLDKTIRVWTIKSDGIKCIDVYDIKEAVHELAANDKLACYVSQGTGVKVFNWSEAPKLINFSKYVKSLAVAGDKLYCGCSGYSIQEVDLSTYTSNSFFTGTRKLLGKQTIHSLQIHDDYLFACGSSVDATAGKIFSLSQKMVVGSLSTGLDIHRIAINSDFIFAGTKFGTIEVWLKDKFTRVASIKMAGGHTKITSLVSDVDGMMLFVGSSDGKIQVWALD</sequence>
<gene>
    <name evidence="7" type="primary">CERBERUS</name>
</gene>
<evidence type="ECO:0000250" key="1">
    <source>
        <dbReference type="UniProtKB" id="D1FP53"/>
    </source>
</evidence>
<evidence type="ECO:0000255" key="2"/>
<evidence type="ECO:0000256" key="3">
    <source>
        <dbReference type="SAM" id="MobiDB-lite"/>
    </source>
</evidence>
<evidence type="ECO:0000269" key="4">
    <source>
    </source>
</evidence>
<evidence type="ECO:0000303" key="5">
    <source>
    </source>
</evidence>
<evidence type="ECO:0000305" key="6"/>
<evidence type="ECO:0000312" key="7">
    <source>
        <dbReference type="EMBL" id="BAH86605.1"/>
    </source>
</evidence>
<comment type="function">
    <text evidence="4">Putative E3 ubiquitin-protein ligase involved in the rhizobial infection process. Plays an important role in the early steps of infection thread formation and in growth and differentiation of nodules.</text>
</comment>
<comment type="catalytic activity">
    <reaction evidence="5">
        <text>S-ubiquitinyl-[E2 ubiquitin-conjugating enzyme]-L-cysteine + [acceptor protein]-L-lysine = [E2 ubiquitin-conjugating enzyme]-L-cysteine + N(6)-ubiquitinyl-[acceptor protein]-L-lysine.</text>
        <dbReference type="EC" id="2.3.2.27"/>
    </reaction>
</comment>
<comment type="pathway">
    <text evidence="5">Protein modification; protein ubiquitination.</text>
</comment>
<comment type="tissue specificity">
    <text evidence="4">Expressed in roots and nodules, and at very low levels in calli and seedling shoots.</text>
</comment>
<comment type="developmental stage">
    <text evidence="4">Expressed at all stages of nodule development.</text>
</comment>
<comment type="induction">
    <text evidence="4">By rhizobial infection. In roots, expression increases up to fivefold at 3-7 days post-inoculation (dpi), with further increase at 12 dpi.</text>
</comment>
<comment type="sequence caution" evidence="6">
    <conflict type="erroneous initiation">
        <sequence resource="EMBL-CDS" id="BAH86605"/>
    </conflict>
    <text>Truncated N-terminus.</text>
</comment>
<comment type="sequence caution" evidence="6">
    <conflict type="erroneous initiation">
        <sequence resource="EMBL-CDS" id="BAH86606"/>
    </conflict>
    <text>Truncated N-terminus.</text>
</comment>
<accession>C6L7U1</accession>
<reference evidence="6 7" key="1">
    <citation type="journal article" date="2009" name="Plant J.">
        <title>CERBERUS, a novel U-box protein containing WD-40 repeats, is required for formation of the infection thread and nodule development in the legume-Rhizobium symbiosis.</title>
        <authorList>
            <person name="Yano K."/>
            <person name="Shibata S."/>
            <person name="Chen W.-L."/>
            <person name="Sato S."/>
            <person name="Kaneko T."/>
            <person name="Jurkiewicz A."/>
            <person name="Sandal N."/>
            <person name="Banba M."/>
            <person name="Imaizumi-Anraku H."/>
            <person name="Kojima T."/>
            <person name="Ohtomo R."/>
            <person name="Szczyglowski K."/>
            <person name="Stougaard J."/>
            <person name="Tabata S."/>
            <person name="Hayashi M."/>
            <person name="Kouchi H."/>
            <person name="Umehara Y."/>
        </authorList>
    </citation>
    <scope>NUCLEOTIDE SEQUENCE [GENOMIC DNA / MRNA]</scope>
    <scope>FUNCTION</scope>
    <scope>TISSUE SPECIFICITY</scope>
    <scope>DEVELOPMENTAL STAGE</scope>
    <scope>INDUCTION</scope>
    <source>
        <tissue evidence="4">Root nodule</tissue>
    </source>
</reference>
<keyword id="KW-0536">Nodulation</keyword>
<keyword id="KW-0677">Repeat</keyword>
<keyword id="KW-0808">Transferase</keyword>
<keyword id="KW-0853">WD repeat</keyword>
<feature type="chain" id="PRO_0000412999" description="Putative E3 ubiquitin-protein ligase LIN-1">
    <location>
        <begin position="1"/>
        <end position="1485"/>
    </location>
</feature>
<feature type="domain" description="U-box">
    <location>
        <begin position="510"/>
        <end position="585"/>
    </location>
</feature>
<feature type="repeat" description="WD 1" evidence="2">
    <location>
        <begin position="1204"/>
        <end position="1241"/>
    </location>
</feature>
<feature type="repeat" description="WD 2" evidence="2">
    <location>
        <begin position="1246"/>
        <end position="1283"/>
    </location>
</feature>
<feature type="repeat" description="WD 3" evidence="2">
    <location>
        <begin position="1409"/>
        <end position="1448"/>
    </location>
</feature>
<feature type="repeat" description="WD 4" evidence="2">
    <location>
        <begin position="1454"/>
        <end position="1485"/>
    </location>
</feature>
<feature type="region of interest" description="Disordered" evidence="3">
    <location>
        <begin position="337"/>
        <end position="363"/>
    </location>
</feature>
<feature type="region of interest" description="Disordered" evidence="3">
    <location>
        <begin position="384"/>
        <end position="417"/>
    </location>
</feature>
<feature type="compositionally biased region" description="Acidic residues" evidence="3">
    <location>
        <begin position="337"/>
        <end position="353"/>
    </location>
</feature>